<proteinExistence type="evidence at protein level"/>
<reference key="1">
    <citation type="journal article" date="1997" name="Nature">
        <title>The nucleotide sequence of Saccharomyces cerevisiae chromosome VII.</title>
        <authorList>
            <person name="Tettelin H."/>
            <person name="Agostoni-Carbone M.L."/>
            <person name="Albermann K."/>
            <person name="Albers M."/>
            <person name="Arroyo J."/>
            <person name="Backes U."/>
            <person name="Barreiros T."/>
            <person name="Bertani I."/>
            <person name="Bjourson A.J."/>
            <person name="Brueckner M."/>
            <person name="Bruschi C.V."/>
            <person name="Carignani G."/>
            <person name="Castagnoli L."/>
            <person name="Cerdan E."/>
            <person name="Clemente M.L."/>
            <person name="Coblenz A."/>
            <person name="Coglievina M."/>
            <person name="Coissac E."/>
            <person name="Defoor E."/>
            <person name="Del Bino S."/>
            <person name="Delius H."/>
            <person name="Delneri D."/>
            <person name="de Wergifosse P."/>
            <person name="Dujon B."/>
            <person name="Durand P."/>
            <person name="Entian K.-D."/>
            <person name="Eraso P."/>
            <person name="Escribano V."/>
            <person name="Fabiani L."/>
            <person name="Fartmann B."/>
            <person name="Feroli F."/>
            <person name="Feuermann M."/>
            <person name="Frontali L."/>
            <person name="Garcia-Gonzalez M."/>
            <person name="Garcia-Saez M.I."/>
            <person name="Goffeau A."/>
            <person name="Guerreiro P."/>
            <person name="Hani J."/>
            <person name="Hansen M."/>
            <person name="Hebling U."/>
            <person name="Hernandez K."/>
            <person name="Heumann K."/>
            <person name="Hilger F."/>
            <person name="Hofmann B."/>
            <person name="Indge K.J."/>
            <person name="James C.M."/>
            <person name="Klima R."/>
            <person name="Koetter P."/>
            <person name="Kramer B."/>
            <person name="Kramer W."/>
            <person name="Lauquin G."/>
            <person name="Leuther H."/>
            <person name="Louis E.J."/>
            <person name="Maillier E."/>
            <person name="Marconi A."/>
            <person name="Martegani E."/>
            <person name="Mazon M.J."/>
            <person name="Mazzoni C."/>
            <person name="McReynolds A.D.K."/>
            <person name="Melchioretto P."/>
            <person name="Mewes H.-W."/>
            <person name="Minenkova O."/>
            <person name="Mueller-Auer S."/>
            <person name="Nawrocki A."/>
            <person name="Netter P."/>
            <person name="Neu R."/>
            <person name="Nombela C."/>
            <person name="Oliver S.G."/>
            <person name="Panzeri L."/>
            <person name="Paoluzi S."/>
            <person name="Plevani P."/>
            <person name="Portetelle D."/>
            <person name="Portillo F."/>
            <person name="Potier S."/>
            <person name="Purnelle B."/>
            <person name="Rieger M."/>
            <person name="Riles L."/>
            <person name="Rinaldi T."/>
            <person name="Robben J."/>
            <person name="Rodrigues-Pousada C."/>
            <person name="Rodriguez-Belmonte E."/>
            <person name="Rodriguez-Torres A.M."/>
            <person name="Rose M."/>
            <person name="Ruzzi M."/>
            <person name="Saliola M."/>
            <person name="Sanchez-Perez M."/>
            <person name="Schaefer B."/>
            <person name="Schaefer M."/>
            <person name="Scharfe M."/>
            <person name="Schmidheini T."/>
            <person name="Schreer A."/>
            <person name="Skala J."/>
            <person name="Souciet J.-L."/>
            <person name="Steensma H.Y."/>
            <person name="Talla E."/>
            <person name="Thierry A."/>
            <person name="Vandenbol M."/>
            <person name="van der Aart Q.J.M."/>
            <person name="Van Dyck L."/>
            <person name="Vanoni M."/>
            <person name="Verhasselt P."/>
            <person name="Voet M."/>
            <person name="Volckaert G."/>
            <person name="Wambutt R."/>
            <person name="Watson M.D."/>
            <person name="Weber N."/>
            <person name="Wedler E."/>
            <person name="Wedler H."/>
            <person name="Wipfli P."/>
            <person name="Wolf K."/>
            <person name="Wright L.F."/>
            <person name="Zaccaria P."/>
            <person name="Zimmermann M."/>
            <person name="Zollner A."/>
            <person name="Kleine K."/>
        </authorList>
    </citation>
    <scope>NUCLEOTIDE SEQUENCE [LARGE SCALE GENOMIC DNA]</scope>
    <source>
        <strain>ATCC 204508 / S288c</strain>
    </source>
</reference>
<reference key="2">
    <citation type="journal article" date="2014" name="G3 (Bethesda)">
        <title>The reference genome sequence of Saccharomyces cerevisiae: Then and now.</title>
        <authorList>
            <person name="Engel S.R."/>
            <person name="Dietrich F.S."/>
            <person name="Fisk D.G."/>
            <person name="Binkley G."/>
            <person name="Balakrishnan R."/>
            <person name="Costanzo M.C."/>
            <person name="Dwight S.S."/>
            <person name="Hitz B.C."/>
            <person name="Karra K."/>
            <person name="Nash R.S."/>
            <person name="Weng S."/>
            <person name="Wong E.D."/>
            <person name="Lloyd P."/>
            <person name="Skrzypek M.S."/>
            <person name="Miyasato S.R."/>
            <person name="Simison M."/>
            <person name="Cherry J.M."/>
        </authorList>
    </citation>
    <scope>GENOME REANNOTATION</scope>
    <source>
        <strain>ATCC 204508 / S288c</strain>
    </source>
</reference>
<reference key="3">
    <citation type="journal article" date="2003" name="Nature">
        <title>Global analysis of protein expression in yeast.</title>
        <authorList>
            <person name="Ghaemmaghami S."/>
            <person name="Huh W.-K."/>
            <person name="Bower K."/>
            <person name="Howson R.W."/>
            <person name="Belle A."/>
            <person name="Dephoure N."/>
            <person name="O'Shea E.K."/>
            <person name="Weissman J.S."/>
        </authorList>
    </citation>
    <scope>LEVEL OF PROTEIN EXPRESSION [LARGE SCALE ANALYSIS]</scope>
</reference>
<keyword id="KW-0576">Peroxisome</keyword>
<keyword id="KW-0962">Peroxisome biogenesis</keyword>
<keyword id="KW-1185">Reference proteome</keyword>
<accession>P53248</accession>
<accession>D6VUK9</accession>
<sequence>MFDHDVEYLITALSSETRIQYDQRLLDEIAANVVYYVPRVKSPDTLYRLVGALFRSQFIVQLPPLRLLHIVKDVFLWKLEVSEPTLPISKFYLVWNAVFESHRATWNLSQLMVLDGVLVTYPSFKQLNNAYFIDESSNKTALYYRNWKLQLFSPIWAQLWNTAIVRANLSIQHCLLIALALLFNQSNRSALLHGVDVSWNLVTEKLLDLLEEYVHGIVQPMEIFSTDSVLSTNLNHLASCLTSSITRSNEATLVNSVRKLERICRYLSDTVASLKEQQLDFKFQNVFILIILALKELSAMNMTILPNHKDTFYSMICLSLFHVHVLTQKIGTVGFPSYDYVYDNLVTYFIVMDDLSKITTVLELMKRNNTKQDPNKLVFYINFLNKITNYYGCRIRLPFITEFIEPLLHFDVFFSGKTGNTLDIEIKESIHTLTITVLSIDSSYSSQVAQWQVSRILVYLKMSMDQFIAGKLSANQILLIFGHLSTQLPSLHNYNKHLLRDSLHETYIRIVNVKNPEKKNVLIECLIVQIAFINNPHHLIGWLNICLQLINTHNKKLLQQLWEMVSSLESSLAIDWWYTTVLSSQSSKL</sequence>
<evidence type="ECO:0000255" key="1"/>
<evidence type="ECO:0000269" key="2">
    <source>
    </source>
</evidence>
<evidence type="ECO:0000305" key="3"/>
<dbReference type="EMBL" id="Z72862">
    <property type="protein sequence ID" value="CAA97079.1"/>
    <property type="molecule type" value="Genomic_DNA"/>
</dbReference>
<dbReference type="EMBL" id="BK006941">
    <property type="protein sequence ID" value="DAA08170.1"/>
    <property type="molecule type" value="Genomic_DNA"/>
</dbReference>
<dbReference type="PIR" id="S64372">
    <property type="entry name" value="S64372"/>
</dbReference>
<dbReference type="RefSeq" id="NP_011591.1">
    <property type="nucleotide sequence ID" value="NM_001181206.1"/>
</dbReference>
<dbReference type="BioGRID" id="33319">
    <property type="interactions" value="183"/>
</dbReference>
<dbReference type="DIP" id="DIP-2478N"/>
<dbReference type="FunCoup" id="P53248">
    <property type="interactions" value="78"/>
</dbReference>
<dbReference type="IntAct" id="P53248">
    <property type="interactions" value="16"/>
</dbReference>
<dbReference type="MINT" id="P53248"/>
<dbReference type="STRING" id="4932.YGR077C"/>
<dbReference type="TCDB" id="3.A.20.1.5">
    <property type="family name" value="the peroxisomal protein importer (ppi) family"/>
</dbReference>
<dbReference type="iPTMnet" id="P53248"/>
<dbReference type="PaxDb" id="4932-YGR077C"/>
<dbReference type="PeptideAtlas" id="P53248"/>
<dbReference type="EnsemblFungi" id="YGR077C_mRNA">
    <property type="protein sequence ID" value="YGR077C"/>
    <property type="gene ID" value="YGR077C"/>
</dbReference>
<dbReference type="GeneID" id="852968"/>
<dbReference type="KEGG" id="sce:YGR077C"/>
<dbReference type="AGR" id="SGD:S000003309"/>
<dbReference type="SGD" id="S000003309">
    <property type="gene designation" value="PEX8"/>
</dbReference>
<dbReference type="VEuPathDB" id="FungiDB:YGR077C"/>
<dbReference type="eggNOG" id="ENOG502R1X7">
    <property type="taxonomic scope" value="Eukaryota"/>
</dbReference>
<dbReference type="HOGENOM" id="CLU_031057_0_0_1"/>
<dbReference type="InParanoid" id="P53248"/>
<dbReference type="OMA" id="GWLNICL"/>
<dbReference type="OrthoDB" id="2357318at2759"/>
<dbReference type="BioCyc" id="YEAST:G3O-30789-MONOMER"/>
<dbReference type="BioGRID-ORCS" id="852968">
    <property type="hits" value="0 hits in 10 CRISPR screens"/>
</dbReference>
<dbReference type="PRO" id="PR:P53248"/>
<dbReference type="Proteomes" id="UP000002311">
    <property type="component" value="Chromosome VII"/>
</dbReference>
<dbReference type="RNAct" id="P53248">
    <property type="molecule type" value="protein"/>
</dbReference>
<dbReference type="GO" id="GO:1990429">
    <property type="term" value="C:peroxisomal importomer complex"/>
    <property type="evidence" value="ECO:0000314"/>
    <property type="project" value="SGD"/>
</dbReference>
<dbReference type="GO" id="GO:0005782">
    <property type="term" value="C:peroxisomal matrix"/>
    <property type="evidence" value="ECO:0007669"/>
    <property type="project" value="UniProtKB-SubCell"/>
</dbReference>
<dbReference type="GO" id="GO:0030674">
    <property type="term" value="F:protein-macromolecule adaptor activity"/>
    <property type="evidence" value="ECO:0000314"/>
    <property type="project" value="SGD"/>
</dbReference>
<dbReference type="GO" id="GO:0016558">
    <property type="term" value="P:protein import into peroxisome matrix"/>
    <property type="evidence" value="ECO:0000315"/>
    <property type="project" value="SGD"/>
</dbReference>
<feature type="chain" id="PRO_0000058343" description="Peroxisomal biogenesis factor 8">
    <location>
        <begin position="1"/>
        <end position="589"/>
    </location>
</feature>
<feature type="short sequence motif" description="Microbody targeting signal" evidence="1">
    <location>
        <begin position="587"/>
        <end position="589"/>
    </location>
</feature>
<protein>
    <recommendedName>
        <fullName>Peroxisomal biogenesis factor 8</fullName>
    </recommendedName>
    <alternativeName>
        <fullName>Peroxin-8</fullName>
    </alternativeName>
    <alternativeName>
        <fullName>Peroxisomal protein PAS6</fullName>
    </alternativeName>
</protein>
<comment type="function">
    <text>Required for peroxisome assembly.</text>
</comment>
<comment type="subcellular location">
    <subcellularLocation>
        <location evidence="3">Peroxisome matrix</location>
    </subcellularLocation>
</comment>
<comment type="miscellaneous">
    <text evidence="2">Present with 538 molecules/cell in log phase SD medium.</text>
</comment>
<name>PEX8_YEAST</name>
<gene>
    <name type="primary">PEX8</name>
    <name type="synonym">PAS6</name>
    <name type="ordered locus">YGR077C</name>
</gene>
<organism>
    <name type="scientific">Saccharomyces cerevisiae (strain ATCC 204508 / S288c)</name>
    <name type="common">Baker's yeast</name>
    <dbReference type="NCBI Taxonomy" id="559292"/>
    <lineage>
        <taxon>Eukaryota</taxon>
        <taxon>Fungi</taxon>
        <taxon>Dikarya</taxon>
        <taxon>Ascomycota</taxon>
        <taxon>Saccharomycotina</taxon>
        <taxon>Saccharomycetes</taxon>
        <taxon>Saccharomycetales</taxon>
        <taxon>Saccharomycetaceae</taxon>
        <taxon>Saccharomyces</taxon>
    </lineage>
</organism>